<evidence type="ECO:0000250" key="1"/>
<evidence type="ECO:0000255" key="2">
    <source>
        <dbReference type="PROSITE-ProRule" id="PRU00276"/>
    </source>
</evidence>
<evidence type="ECO:0000269" key="3">
    <source>
    </source>
</evidence>
<evidence type="ECO:0000305" key="4"/>
<evidence type="ECO:0000305" key="5">
    <source>
    </source>
</evidence>
<dbReference type="EC" id="3.4.24.-"/>
<dbReference type="SMR" id="P0C7A9"/>
<dbReference type="MEROPS" id="M12.341"/>
<dbReference type="GO" id="GO:0005576">
    <property type="term" value="C:extracellular region"/>
    <property type="evidence" value="ECO:0007669"/>
    <property type="project" value="UniProtKB-SubCell"/>
</dbReference>
<dbReference type="GO" id="GO:0046872">
    <property type="term" value="F:metal ion binding"/>
    <property type="evidence" value="ECO:0007669"/>
    <property type="project" value="UniProtKB-KW"/>
</dbReference>
<dbReference type="GO" id="GO:0008237">
    <property type="term" value="F:metallopeptidase activity"/>
    <property type="evidence" value="ECO:0007669"/>
    <property type="project" value="UniProtKB-KW"/>
</dbReference>
<dbReference type="GO" id="GO:0016504">
    <property type="term" value="F:peptidase activator activity"/>
    <property type="evidence" value="ECO:0007669"/>
    <property type="project" value="UniProtKB-KW"/>
</dbReference>
<dbReference type="GO" id="GO:0090729">
    <property type="term" value="F:toxin activity"/>
    <property type="evidence" value="ECO:0007669"/>
    <property type="project" value="UniProtKB-KW"/>
</dbReference>
<dbReference type="GO" id="GO:0006508">
    <property type="term" value="P:proteolysis"/>
    <property type="evidence" value="ECO:0007669"/>
    <property type="project" value="UniProtKB-KW"/>
</dbReference>
<dbReference type="Gene3D" id="3.40.390.10">
    <property type="entry name" value="Collagenase (Catalytic Domain)"/>
    <property type="match status" value="1"/>
</dbReference>
<dbReference type="InterPro" id="IPR024079">
    <property type="entry name" value="MetalloPept_cat_dom_sf"/>
</dbReference>
<dbReference type="SUPFAM" id="SSF55486">
    <property type="entry name" value="Metalloproteases ('zincins'), catalytic domain"/>
    <property type="match status" value="1"/>
</dbReference>
<accession>P0C7A9</accession>
<protein>
    <recommendedName>
        <fullName>Snake venom metalloproteinase bothrojaractivase</fullName>
        <shortName>SVMP</shortName>
        <ecNumber>3.4.24.-</ecNumber>
    </recommendedName>
</protein>
<comment type="function">
    <text evidence="3">Prothrombin (F2) activator that is cofactor-independent. Also has fibrinolytic and fibrinogenolytic activity. It degrades the Aalpha-chain and more slowly the Bbeta-chain of fibrin and fibrinogen, while the gamma-chain is only partially and slowly affected. A dose-dependent procoagulant activity is shown in human plasma.</text>
</comment>
<comment type="cofactor">
    <cofactor evidence="1">
        <name>Zn(2+)</name>
        <dbReference type="ChEBI" id="CHEBI:29105"/>
    </cofactor>
    <text evidence="1">Binds 1 zinc ion per subunit.</text>
</comment>
<comment type="activity regulation">
    <text evidence="3">Completely inhibited by EDTA and EGTA. Partially inhibited by serine proteinase inhibitors PMSF and benzamidine. Not inhibited by cysteine proteinase inhibitors mercury ions and E-64. Is active without cofactors, although the presence of low concentrations of calcium and zinc ions enhanced its ability to convert prothrombin (F2) into active thrombin.</text>
</comment>
<comment type="biophysicochemical properties">
    <phDependence>
        <text evidence="3">Optimum pH is 8.0.</text>
    </phDependence>
</comment>
<comment type="subunit">
    <text evidence="3">Monomer.</text>
</comment>
<comment type="subcellular location">
    <subcellularLocation>
        <location evidence="3">Secreted</location>
    </subcellularLocation>
</comment>
<comment type="tissue specificity">
    <text evidence="5">Expressed by the venom gland.</text>
</comment>
<comment type="mass spectrometry" mass="22829.0" error="45.0" method="MALDI" evidence="3"/>
<comment type="miscellaneous">
    <text evidence="5">Negative results: does not present direct thrombin-like or amidolytic activities.</text>
</comment>
<comment type="similarity">
    <text evidence="4">Belongs to the venom metalloproteinase (M12B) family. P-I subfamily.</text>
</comment>
<proteinExistence type="evidence at protein level"/>
<keyword id="KW-1204">Blood coagulation cascade activating toxin</keyword>
<keyword id="KW-0106">Calcium</keyword>
<keyword id="KW-0903">Direct protein sequencing</keyword>
<keyword id="KW-1206">Fibrinogenolytic toxin</keyword>
<keyword id="KW-1205">Fibrinolytic toxin</keyword>
<keyword id="KW-1199">Hemostasis impairing toxin</keyword>
<keyword id="KW-0378">Hydrolase</keyword>
<keyword id="KW-0479">Metal-binding</keyword>
<keyword id="KW-0482">Metalloprotease</keyword>
<keyword id="KW-0645">Protease</keyword>
<keyword id="KW-0655">Prothrombin activator</keyword>
<keyword id="KW-0964">Secreted</keyword>
<keyword id="KW-0800">Toxin</keyword>
<keyword id="KW-0862">Zinc</keyword>
<name>VM1BJ_BOTJA</name>
<feature type="chain" id="PRO_0000329994" description="Snake venom metalloproteinase bothrojaractivase">
    <location>
        <begin position="1" status="less than"/>
        <end position="60" status="greater than"/>
    </location>
</feature>
<feature type="domain" description="Peptidase M12B" evidence="2">
    <location>
        <begin position="1"/>
        <end position="60" status="greater than"/>
    </location>
</feature>
<feature type="binding site" evidence="1">
    <location>
        <position position="4"/>
    </location>
    <ligand>
        <name>Ca(2+)</name>
        <dbReference type="ChEBI" id="CHEBI:29108"/>
    </ligand>
</feature>
<feature type="non-consecutive residues" evidence="4">
    <location>
        <begin position="17"/>
        <end position="18"/>
    </location>
</feature>
<feature type="non-consecutive residues" evidence="4">
    <location>
        <begin position="32"/>
        <end position="33"/>
    </location>
</feature>
<feature type="non-terminal residue">
    <location>
        <position position="1"/>
    </location>
</feature>
<feature type="non-terminal residue">
    <location>
        <position position="60"/>
    </location>
</feature>
<reference key="1">
    <citation type="journal article" date="2008" name="Toxicon">
        <title>Purification and functional characterization of bothrojaractivase, a prothrombin-activating metalloproteinase isolated from Bothrops jararaca snake venom.</title>
        <authorList>
            <person name="Berger M."/>
            <person name="Pinto A.F.M."/>
            <person name="Guimaraes J.A."/>
        </authorList>
    </citation>
    <scope>PROTEIN SEQUENCE</scope>
    <scope>FUNCTION</scope>
    <scope>ACTIVITY REGULATION</scope>
    <scope>BIOPHYSICOCHEMICAL PROPERTIES</scope>
    <scope>SUBUNIT</scope>
    <scope>SUBCELLULAR LOCATION</scope>
    <scope>MASS SPECTROMETRY</scope>
    <source>
        <tissue>Venom</tissue>
    </source>
</reference>
<organism>
    <name type="scientific">Bothrops jararaca</name>
    <name type="common">Jararaca</name>
    <name type="synonym">Bothrops jajaraca</name>
    <dbReference type="NCBI Taxonomy" id="8724"/>
    <lineage>
        <taxon>Eukaryota</taxon>
        <taxon>Metazoa</taxon>
        <taxon>Chordata</taxon>
        <taxon>Craniata</taxon>
        <taxon>Vertebrata</taxon>
        <taxon>Euteleostomi</taxon>
        <taxon>Lepidosauria</taxon>
        <taxon>Squamata</taxon>
        <taxon>Bifurcata</taxon>
        <taxon>Unidentata</taxon>
        <taxon>Episquamata</taxon>
        <taxon>Toxicofera</taxon>
        <taxon>Serpentes</taxon>
        <taxon>Colubroidea</taxon>
        <taxon>Viperidae</taxon>
        <taxon>Crotalinae</taxon>
        <taxon>Bothrops</taxon>
    </lineage>
</organism>
<sequence length="60" mass="7166">RYIELAVVADHGMFTKYRVHELVNTVNGFFRSKQDLIKVQKDKTLTSFGEWRERDLLPRI</sequence>